<proteinExistence type="inferred from homology"/>
<reference key="1">
    <citation type="submission" date="2007-10" db="EMBL/GenBank/DDBJ databases">
        <title>Brucella canis ATCC 23365 whole genome shotgun sequencing project.</title>
        <authorList>
            <person name="Setubal J.C."/>
            <person name="Bowns C."/>
            <person name="Boyle S."/>
            <person name="Crasta O.R."/>
            <person name="Czar M.J."/>
            <person name="Dharmanolla C."/>
            <person name="Gillespie J.J."/>
            <person name="Kenyon R.W."/>
            <person name="Lu J."/>
            <person name="Mane S."/>
            <person name="Mohapatra S."/>
            <person name="Nagrani S."/>
            <person name="Purkayastha A."/>
            <person name="Rajasimha H.K."/>
            <person name="Shallom J.M."/>
            <person name="Shallom S."/>
            <person name="Shukla M."/>
            <person name="Snyder E.E."/>
            <person name="Sobral B.W."/>
            <person name="Wattam A.R."/>
            <person name="Will R."/>
            <person name="Williams K."/>
            <person name="Yoo H."/>
            <person name="Bruce D."/>
            <person name="Detter C."/>
            <person name="Munk C."/>
            <person name="Brettin T.S."/>
        </authorList>
    </citation>
    <scope>NUCLEOTIDE SEQUENCE [LARGE SCALE GENOMIC DNA]</scope>
    <source>
        <strain>ATCC 23365 / NCTC 10854 / RM-666</strain>
    </source>
</reference>
<keyword id="KW-0169">Cobalamin biosynthesis</keyword>
<keyword id="KW-0328">Glycosyltransferase</keyword>
<keyword id="KW-1185">Reference proteome</keyword>
<keyword id="KW-0808">Transferase</keyword>
<organism>
    <name type="scientific">Brucella canis (strain ATCC 23365 / NCTC 10854 / RM-666)</name>
    <dbReference type="NCBI Taxonomy" id="483179"/>
    <lineage>
        <taxon>Bacteria</taxon>
        <taxon>Pseudomonadati</taxon>
        <taxon>Pseudomonadota</taxon>
        <taxon>Alphaproteobacteria</taxon>
        <taxon>Hyphomicrobiales</taxon>
        <taxon>Brucellaceae</taxon>
        <taxon>Brucella/Ochrobactrum group</taxon>
        <taxon>Brucella</taxon>
    </lineage>
</organism>
<feature type="chain" id="PRO_1000078238" description="Nicotinate-nucleotide--dimethylbenzimidazole phosphoribosyltransferase">
    <location>
        <begin position="1"/>
        <end position="339"/>
    </location>
</feature>
<feature type="active site" description="Proton acceptor" evidence="1">
    <location>
        <position position="306"/>
    </location>
</feature>
<dbReference type="EC" id="2.4.2.21" evidence="1"/>
<dbReference type="EMBL" id="CP000872">
    <property type="protein sequence ID" value="ABX61943.1"/>
    <property type="molecule type" value="Genomic_DNA"/>
</dbReference>
<dbReference type="RefSeq" id="WP_004690777.1">
    <property type="nucleotide sequence ID" value="NC_010103.1"/>
</dbReference>
<dbReference type="SMR" id="A9MAP0"/>
<dbReference type="GeneID" id="55590573"/>
<dbReference type="KEGG" id="bcs:BCAN_A0881"/>
<dbReference type="HOGENOM" id="CLU_002982_0_1_5"/>
<dbReference type="PhylomeDB" id="A9MAP0"/>
<dbReference type="UniPathway" id="UPA00061">
    <property type="reaction ID" value="UER00516"/>
</dbReference>
<dbReference type="Proteomes" id="UP000001385">
    <property type="component" value="Chromosome I"/>
</dbReference>
<dbReference type="GO" id="GO:0008939">
    <property type="term" value="F:nicotinate-nucleotide-dimethylbenzimidazole phosphoribosyltransferase activity"/>
    <property type="evidence" value="ECO:0007669"/>
    <property type="project" value="UniProtKB-UniRule"/>
</dbReference>
<dbReference type="GO" id="GO:0009236">
    <property type="term" value="P:cobalamin biosynthetic process"/>
    <property type="evidence" value="ECO:0007669"/>
    <property type="project" value="UniProtKB-KW"/>
</dbReference>
<dbReference type="CDD" id="cd02439">
    <property type="entry name" value="DMB-PRT_CobT"/>
    <property type="match status" value="1"/>
</dbReference>
<dbReference type="Gene3D" id="1.10.1610.10">
    <property type="match status" value="1"/>
</dbReference>
<dbReference type="Gene3D" id="3.40.50.10210">
    <property type="match status" value="1"/>
</dbReference>
<dbReference type="HAMAP" id="MF_00230">
    <property type="entry name" value="CobT"/>
    <property type="match status" value="1"/>
</dbReference>
<dbReference type="InterPro" id="IPR003200">
    <property type="entry name" value="Nict_dMeBzImd_PRibTrfase"/>
</dbReference>
<dbReference type="InterPro" id="IPR017846">
    <property type="entry name" value="Nict_dMeBzImd_PRibTrfase_bact"/>
</dbReference>
<dbReference type="InterPro" id="IPR023195">
    <property type="entry name" value="Nict_dMeBzImd_PRibTrfase_N"/>
</dbReference>
<dbReference type="InterPro" id="IPR036087">
    <property type="entry name" value="Nict_dMeBzImd_PRibTrfase_sf"/>
</dbReference>
<dbReference type="NCBIfam" id="TIGR03160">
    <property type="entry name" value="cobT_DBIPRT"/>
    <property type="match status" value="1"/>
</dbReference>
<dbReference type="NCBIfam" id="NF000996">
    <property type="entry name" value="PRK00105.1"/>
    <property type="match status" value="1"/>
</dbReference>
<dbReference type="PANTHER" id="PTHR43463">
    <property type="entry name" value="NICOTINATE-NUCLEOTIDE--DIMETHYLBENZIMIDAZOLE PHOSPHORIBOSYLTRANSFERASE"/>
    <property type="match status" value="1"/>
</dbReference>
<dbReference type="PANTHER" id="PTHR43463:SF1">
    <property type="entry name" value="NICOTINATE-NUCLEOTIDE--DIMETHYLBENZIMIDAZOLE PHOSPHORIBOSYLTRANSFERASE"/>
    <property type="match status" value="1"/>
</dbReference>
<dbReference type="Pfam" id="PF02277">
    <property type="entry name" value="DBI_PRT"/>
    <property type="match status" value="1"/>
</dbReference>
<dbReference type="SUPFAM" id="SSF52733">
    <property type="entry name" value="Nicotinate mononucleotide:5,6-dimethylbenzimidazole phosphoribosyltransferase (CobT)"/>
    <property type="match status" value="1"/>
</dbReference>
<protein>
    <recommendedName>
        <fullName evidence="1">Nicotinate-nucleotide--dimethylbenzimidazole phosphoribosyltransferase</fullName>
        <shortName evidence="1">NN:DBI PRT</shortName>
        <ecNumber evidence="1">2.4.2.21</ecNumber>
    </recommendedName>
    <alternativeName>
        <fullName evidence="1">N(1)-alpha-phosphoribosyltransferase</fullName>
    </alternativeName>
</protein>
<evidence type="ECO:0000255" key="1">
    <source>
        <dbReference type="HAMAP-Rule" id="MF_00230"/>
    </source>
</evidence>
<name>COBT_BRUC2</name>
<comment type="function">
    <text evidence="1">Catalyzes the synthesis of alpha-ribazole-5'-phosphate from nicotinate mononucleotide (NAMN) and 5,6-dimethylbenzimidazole (DMB).</text>
</comment>
<comment type="catalytic activity">
    <reaction evidence="1">
        <text>5,6-dimethylbenzimidazole + nicotinate beta-D-ribonucleotide = alpha-ribazole 5'-phosphate + nicotinate + H(+)</text>
        <dbReference type="Rhea" id="RHEA:11196"/>
        <dbReference type="ChEBI" id="CHEBI:15378"/>
        <dbReference type="ChEBI" id="CHEBI:15890"/>
        <dbReference type="ChEBI" id="CHEBI:32544"/>
        <dbReference type="ChEBI" id="CHEBI:57502"/>
        <dbReference type="ChEBI" id="CHEBI:57918"/>
        <dbReference type="EC" id="2.4.2.21"/>
    </reaction>
</comment>
<comment type="pathway">
    <text evidence="1">Nucleoside biosynthesis; alpha-ribazole biosynthesis; alpha-ribazole from 5,6-dimethylbenzimidazole: step 1/2.</text>
</comment>
<comment type="similarity">
    <text evidence="1">Belongs to the CobT family.</text>
</comment>
<gene>
    <name evidence="1" type="primary">cobT</name>
    <name type="ordered locus">BCAN_A0881</name>
</gene>
<accession>A9MAP0</accession>
<sequence length="339" mass="35136">MSASGLPFDDFRELIRNLPGPDLGAERAVREREVTLTKPAGSLGRLEEIVAWLATWTGKRTPQVNRPLVAVFAGNHGVTAKNITPFPPSVTAQMVENFAAGGAAINQICIANDLGLKVFDLALEHPTGDITEEAAMDERTCAATMAFGMEAIAGGTDLLCIGEMGIGNTTIAAAIALALFGGTAEDWVGPGTGSTGELMQRKLAAVRQAVALHQPHLQDPLEVLRCLGGREIAAMAGAILAARMEKIPVIVDGFVASAAAAVLYAANPEAIDHCMFGHVSAEPGHRKLLAKMGKEPLLDLGMRLGEGTGAALAANIVKAAALCHSGMATFEQAGVSASK</sequence>